<keyword id="KW-0007">Acetylation</keyword>
<keyword id="KW-0067">ATP-binding</keyword>
<keyword id="KW-0963">Cytoplasm</keyword>
<keyword id="KW-0903">Direct protein sequencing</keyword>
<keyword id="KW-0418">Kinase</keyword>
<keyword id="KW-0547">Nucleotide-binding</keyword>
<keyword id="KW-0539">Nucleus</keyword>
<keyword id="KW-0597">Phosphoprotein</keyword>
<keyword id="KW-0665">Pyrimidine biosynthesis</keyword>
<keyword id="KW-1185">Reference proteome</keyword>
<keyword id="KW-0808">Transferase</keyword>
<reference key="1">
    <citation type="journal article" date="1995" name="J. Biochem.">
        <title>Cloning, sequencing, and expression in Escherichia coli of cDNA encoding porcine brain UMP-CMP kinase.</title>
        <authorList>
            <person name="Okajima T."/>
            <person name="Goto S."/>
            <person name="Tanizawa K."/>
            <person name="Tagaya M."/>
            <person name="Shimofuruya H."/>
            <person name="Suzuki J."/>
            <person name="Fukui T."/>
        </authorList>
    </citation>
    <scope>NUCLEOTIDE SEQUENCE [GENOMIC DNA]</scope>
    <scope>PARTIAL PROTEIN SEQUENCE</scope>
    <source>
        <tissue>Brain</tissue>
    </source>
</reference>
<name>KCY_PIG</name>
<sequence length="196" mass="22279">MRPKVVFVLGGPGAGKGTQCARIVEKYGYTHLSAGELLRDERKNPDSQYGELIEKYIKDGKIVPVEITISLLRREMDQTMAANAQKNKFLIDGFPRNQDNLQGWNKTMDGKADVSFVLFFDCNNEICIERCLERGKSSGRSDDNRESLEKRIQTYLQSTKPIIDLYEEMGKVKKIDASKSVDEVFDEVVKIFDKEG</sequence>
<accession>Q29561</accession>
<proteinExistence type="evidence at protein level"/>
<evidence type="ECO:0000250" key="1">
    <source>
        <dbReference type="UniProtKB" id="P30085"/>
    </source>
</evidence>
<evidence type="ECO:0000250" key="2">
    <source>
        <dbReference type="UniProtKB" id="Q4KM73"/>
    </source>
</evidence>
<evidence type="ECO:0000250" key="3">
    <source>
        <dbReference type="UniProtKB" id="Q9DBP5"/>
    </source>
</evidence>
<evidence type="ECO:0000255" key="4">
    <source>
        <dbReference type="HAMAP-Rule" id="MF_03172"/>
    </source>
</evidence>
<feature type="chain" id="PRO_0000158951" description="UMP-CMP kinase">
    <location>
        <begin position="1"/>
        <end position="196"/>
    </location>
</feature>
<feature type="region of interest" description="NMP" evidence="4">
    <location>
        <begin position="33"/>
        <end position="63"/>
    </location>
</feature>
<feature type="region of interest" description="LID" evidence="4">
    <location>
        <begin position="133"/>
        <end position="143"/>
    </location>
</feature>
<feature type="binding site" evidence="4">
    <location>
        <begin position="13"/>
        <end position="18"/>
    </location>
    <ligand>
        <name>ATP</name>
        <dbReference type="ChEBI" id="CHEBI:30616"/>
    </ligand>
</feature>
<feature type="binding site" evidence="4">
    <location>
        <position position="39"/>
    </location>
    <ligand>
        <name>a ribonucleoside 5'-phosphate</name>
        <dbReference type="ChEBI" id="CHEBI:58043"/>
    </ligand>
</feature>
<feature type="binding site" evidence="4">
    <location>
        <begin position="61"/>
        <end position="63"/>
    </location>
    <ligand>
        <name>a ribonucleoside 5'-phosphate</name>
        <dbReference type="ChEBI" id="CHEBI:58043"/>
    </ligand>
</feature>
<feature type="binding site" evidence="4">
    <location>
        <begin position="93"/>
        <end position="96"/>
    </location>
    <ligand>
        <name>a ribonucleoside 5'-phosphate</name>
        <dbReference type="ChEBI" id="CHEBI:58043"/>
    </ligand>
</feature>
<feature type="binding site" evidence="4">
    <location>
        <position position="100"/>
    </location>
    <ligand>
        <name>CMP</name>
        <dbReference type="ChEBI" id="CHEBI:60377"/>
    </ligand>
</feature>
<feature type="binding site" evidence="4">
    <location>
        <position position="134"/>
    </location>
    <ligand>
        <name>ATP</name>
        <dbReference type="ChEBI" id="CHEBI:30616"/>
    </ligand>
</feature>
<feature type="binding site" evidence="4">
    <location>
        <position position="140"/>
    </location>
    <ligand>
        <name>a ribonucleoside 5'-phosphate</name>
        <dbReference type="ChEBI" id="CHEBI:58043"/>
    </ligand>
</feature>
<feature type="binding site" evidence="4">
    <location>
        <position position="151"/>
    </location>
    <ligand>
        <name>a ribonucleoside 5'-phosphate</name>
        <dbReference type="ChEBI" id="CHEBI:58043"/>
    </ligand>
</feature>
<feature type="binding site" evidence="4">
    <location>
        <position position="179"/>
    </location>
    <ligand>
        <name>ATP</name>
        <dbReference type="ChEBI" id="CHEBI:30616"/>
    </ligand>
</feature>
<feature type="modified residue" description="Phosphoserine" evidence="1">
    <location>
        <position position="33"/>
    </location>
</feature>
<feature type="modified residue" description="N6-acetyllysine" evidence="3">
    <location>
        <position position="43"/>
    </location>
</feature>
<feature type="modified residue" description="N6-acetyllysine" evidence="1">
    <location>
        <position position="55"/>
    </location>
</feature>
<feature type="modified residue" description="N6-succinyllysine" evidence="3">
    <location>
        <position position="106"/>
    </location>
</feature>
<feature type="modified residue" description="Phosphoserine" evidence="2">
    <location>
        <position position="180"/>
    </location>
</feature>
<protein>
    <recommendedName>
        <fullName evidence="4">UMP-CMP kinase</fullName>
        <ecNumber evidence="4">2.7.4.14</ecNumber>
    </recommendedName>
    <alternativeName>
        <fullName evidence="4">Deoxycytidylate kinase</fullName>
        <shortName evidence="4">CK</shortName>
        <shortName evidence="4">dCMP kinase</shortName>
    </alternativeName>
    <alternativeName>
        <fullName evidence="4">Nucleoside-diphosphate kinase</fullName>
        <ecNumber evidence="4">2.7.4.6</ecNumber>
    </alternativeName>
    <alternativeName>
        <fullName evidence="4">Uridine monophosphate/cytidine monophosphate kinase</fullName>
        <shortName evidence="4">UMP/CMP kinase</shortName>
        <shortName evidence="4">UMP/CMPK</shortName>
    </alternativeName>
</protein>
<dbReference type="EC" id="2.7.4.14" evidence="4"/>
<dbReference type="EC" id="2.7.4.6" evidence="4"/>
<dbReference type="EMBL" id="D29655">
    <property type="protein sequence ID" value="BAA06130.1"/>
    <property type="molecule type" value="Genomic_DNA"/>
</dbReference>
<dbReference type="PIR" id="JC4181">
    <property type="entry name" value="JC4181"/>
</dbReference>
<dbReference type="SMR" id="Q29561"/>
<dbReference type="FunCoup" id="Q29561">
    <property type="interactions" value="906"/>
</dbReference>
<dbReference type="STRING" id="9823.ENSSSCP00000062371"/>
<dbReference type="PaxDb" id="9823-ENSSSCP00000004197"/>
<dbReference type="PeptideAtlas" id="Q29561"/>
<dbReference type="Ensembl" id="ENSSSCT00000004297.5">
    <property type="protein sequence ID" value="ENSSSCP00000004197.4"/>
    <property type="gene ID" value="ENSSSCG00000003885.5"/>
</dbReference>
<dbReference type="Ensembl" id="ENSSSCT00025055091.1">
    <property type="protein sequence ID" value="ENSSSCP00025023411.1"/>
    <property type="gene ID" value="ENSSSCG00025040540.1"/>
</dbReference>
<dbReference type="Ensembl" id="ENSSSCT00055009516.1">
    <property type="protein sequence ID" value="ENSSSCP00055007558.1"/>
    <property type="gene ID" value="ENSSSCG00055004819.1"/>
</dbReference>
<dbReference type="Ensembl" id="ENSSSCT00060073348.1">
    <property type="protein sequence ID" value="ENSSSCP00060031637.1"/>
    <property type="gene ID" value="ENSSSCG00060053866.1"/>
</dbReference>
<dbReference type="Ensembl" id="ENSSSCT00110012053">
    <property type="protein sequence ID" value="ENSSSCP00110008482"/>
    <property type="gene ID" value="ENSSSCG00110006131"/>
</dbReference>
<dbReference type="VGNC" id="VGNC:96953">
    <property type="gene designation" value="CMPK1"/>
</dbReference>
<dbReference type="eggNOG" id="KOG3079">
    <property type="taxonomic scope" value="Eukaryota"/>
</dbReference>
<dbReference type="GeneTree" id="ENSGT00940000160589"/>
<dbReference type="HOGENOM" id="CLU_032354_0_2_1"/>
<dbReference type="InParanoid" id="Q29561"/>
<dbReference type="TreeFam" id="TF354283"/>
<dbReference type="Reactome" id="R-SSC-499943">
    <property type="pathway name" value="Interconversion of nucleotide di- and triphosphates"/>
</dbReference>
<dbReference type="Proteomes" id="UP000008227">
    <property type="component" value="Chromosome 6"/>
</dbReference>
<dbReference type="Proteomes" id="UP000314985">
    <property type="component" value="Unplaced"/>
</dbReference>
<dbReference type="Proteomes" id="UP000694570">
    <property type="component" value="Unplaced"/>
</dbReference>
<dbReference type="Proteomes" id="UP000694571">
    <property type="component" value="Unplaced"/>
</dbReference>
<dbReference type="Proteomes" id="UP000694720">
    <property type="component" value="Unplaced"/>
</dbReference>
<dbReference type="Proteomes" id="UP000694722">
    <property type="component" value="Unplaced"/>
</dbReference>
<dbReference type="Proteomes" id="UP000694723">
    <property type="component" value="Unplaced"/>
</dbReference>
<dbReference type="Proteomes" id="UP000694724">
    <property type="component" value="Unplaced"/>
</dbReference>
<dbReference type="Proteomes" id="UP000694725">
    <property type="component" value="Unplaced"/>
</dbReference>
<dbReference type="Proteomes" id="UP000694726">
    <property type="component" value="Unplaced"/>
</dbReference>
<dbReference type="Proteomes" id="UP000694727">
    <property type="component" value="Unplaced"/>
</dbReference>
<dbReference type="Proteomes" id="UP000694728">
    <property type="component" value="Unplaced"/>
</dbReference>
<dbReference type="Bgee" id="ENSSSCG00000003885">
    <property type="expression patterns" value="Expressed in Ammon's horn and 45 other cell types or tissues"/>
</dbReference>
<dbReference type="ExpressionAtlas" id="Q29561">
    <property type="expression patterns" value="baseline and differential"/>
</dbReference>
<dbReference type="GO" id="GO:0005737">
    <property type="term" value="C:cytoplasm"/>
    <property type="evidence" value="ECO:0000318"/>
    <property type="project" value="GO_Central"/>
</dbReference>
<dbReference type="GO" id="GO:0005634">
    <property type="term" value="C:nucleus"/>
    <property type="evidence" value="ECO:0000318"/>
    <property type="project" value="GO_Central"/>
</dbReference>
<dbReference type="GO" id="GO:0004127">
    <property type="term" value="F:(d)CMP kinase activity"/>
    <property type="evidence" value="ECO:0000318"/>
    <property type="project" value="GO_Central"/>
</dbReference>
<dbReference type="GO" id="GO:0005524">
    <property type="term" value="F:ATP binding"/>
    <property type="evidence" value="ECO:0007669"/>
    <property type="project" value="UniProtKB-KW"/>
</dbReference>
<dbReference type="GO" id="GO:0036430">
    <property type="term" value="F:CMP kinase activity"/>
    <property type="evidence" value="ECO:0007669"/>
    <property type="project" value="RHEA"/>
</dbReference>
<dbReference type="GO" id="GO:0036431">
    <property type="term" value="F:dCMP kinase activity"/>
    <property type="evidence" value="ECO:0007669"/>
    <property type="project" value="RHEA"/>
</dbReference>
<dbReference type="GO" id="GO:0004550">
    <property type="term" value="F:nucleoside diphosphate kinase activity"/>
    <property type="evidence" value="ECO:0000250"/>
    <property type="project" value="UniProtKB"/>
</dbReference>
<dbReference type="GO" id="GO:0033862">
    <property type="term" value="F:UMP kinase activity"/>
    <property type="evidence" value="ECO:0000318"/>
    <property type="project" value="GO_Central"/>
</dbReference>
<dbReference type="GO" id="GO:0006207">
    <property type="term" value="P:'de novo' pyrimidine nucleobase biosynthetic process"/>
    <property type="evidence" value="ECO:0007669"/>
    <property type="project" value="InterPro"/>
</dbReference>
<dbReference type="GO" id="GO:0046705">
    <property type="term" value="P:CDP biosynthetic process"/>
    <property type="evidence" value="ECO:0000318"/>
    <property type="project" value="GO_Central"/>
</dbReference>
<dbReference type="GO" id="GO:0006225">
    <property type="term" value="P:UDP biosynthetic process"/>
    <property type="evidence" value="ECO:0000318"/>
    <property type="project" value="GO_Central"/>
</dbReference>
<dbReference type="CDD" id="cd01428">
    <property type="entry name" value="ADK"/>
    <property type="match status" value="1"/>
</dbReference>
<dbReference type="FunFam" id="3.40.50.300:FF:000315">
    <property type="entry name" value="Adenylate kinase 1"/>
    <property type="match status" value="1"/>
</dbReference>
<dbReference type="Gene3D" id="3.40.50.300">
    <property type="entry name" value="P-loop containing nucleotide triphosphate hydrolases"/>
    <property type="match status" value="1"/>
</dbReference>
<dbReference type="HAMAP" id="MF_00235">
    <property type="entry name" value="Adenylate_kinase_Adk"/>
    <property type="match status" value="1"/>
</dbReference>
<dbReference type="HAMAP" id="MF_03172">
    <property type="entry name" value="Adenylate_kinase_UMP_CMP_kin"/>
    <property type="match status" value="1"/>
</dbReference>
<dbReference type="InterPro" id="IPR000850">
    <property type="entry name" value="Adenylat/UMP-CMP_kin"/>
</dbReference>
<dbReference type="InterPro" id="IPR033690">
    <property type="entry name" value="Adenylat_kinase_CS"/>
</dbReference>
<dbReference type="InterPro" id="IPR027417">
    <property type="entry name" value="P-loop_NTPase"/>
</dbReference>
<dbReference type="InterPro" id="IPR006266">
    <property type="entry name" value="UMP_CMP_kinase"/>
</dbReference>
<dbReference type="NCBIfam" id="TIGR01359">
    <property type="entry name" value="UMP_CMP_kin_fam"/>
    <property type="match status" value="1"/>
</dbReference>
<dbReference type="PANTHER" id="PTHR23359">
    <property type="entry name" value="NUCLEOTIDE KINASE"/>
    <property type="match status" value="1"/>
</dbReference>
<dbReference type="Pfam" id="PF00406">
    <property type="entry name" value="ADK"/>
    <property type="match status" value="1"/>
</dbReference>
<dbReference type="PRINTS" id="PR00094">
    <property type="entry name" value="ADENYLTKNASE"/>
</dbReference>
<dbReference type="SUPFAM" id="SSF52540">
    <property type="entry name" value="P-loop containing nucleoside triphosphate hydrolases"/>
    <property type="match status" value="1"/>
</dbReference>
<dbReference type="PROSITE" id="PS00113">
    <property type="entry name" value="ADENYLATE_KINASE"/>
    <property type="match status" value="1"/>
</dbReference>
<gene>
    <name evidence="4" type="primary">CMPK1</name>
    <name evidence="4" type="synonym">CMPK</name>
    <name type="synonym">UCK</name>
</gene>
<comment type="function">
    <text>Catalyzes the phosphorylation of pyrimidine nucleoside monophosphates at the expense of ATP. Plays an important role in de novo pyrimidine nucleotide biosynthesis. Has preference for UMP and CMP as phosphate acceptors. Also displays broad nucleoside diphosphate kinase activity.</text>
</comment>
<comment type="catalytic activity">
    <reaction evidence="4">
        <text>CMP + ATP = CDP + ADP</text>
        <dbReference type="Rhea" id="RHEA:11600"/>
        <dbReference type="ChEBI" id="CHEBI:30616"/>
        <dbReference type="ChEBI" id="CHEBI:58069"/>
        <dbReference type="ChEBI" id="CHEBI:60377"/>
        <dbReference type="ChEBI" id="CHEBI:456216"/>
        <dbReference type="EC" id="2.7.4.14"/>
    </reaction>
</comment>
<comment type="catalytic activity">
    <reaction evidence="4">
        <text>dCMP + ATP = dCDP + ADP</text>
        <dbReference type="Rhea" id="RHEA:25094"/>
        <dbReference type="ChEBI" id="CHEBI:30616"/>
        <dbReference type="ChEBI" id="CHEBI:57566"/>
        <dbReference type="ChEBI" id="CHEBI:58593"/>
        <dbReference type="ChEBI" id="CHEBI:456216"/>
        <dbReference type="EC" id="2.7.4.14"/>
    </reaction>
</comment>
<comment type="catalytic activity">
    <reaction evidence="4">
        <text>UMP + ATP = UDP + ADP</text>
        <dbReference type="Rhea" id="RHEA:24400"/>
        <dbReference type="ChEBI" id="CHEBI:30616"/>
        <dbReference type="ChEBI" id="CHEBI:57865"/>
        <dbReference type="ChEBI" id="CHEBI:58223"/>
        <dbReference type="ChEBI" id="CHEBI:456216"/>
        <dbReference type="EC" id="2.7.4.14"/>
    </reaction>
</comment>
<comment type="catalytic activity">
    <reaction evidence="4">
        <text>a 2'-deoxyribonucleoside 5'-diphosphate + ATP = a 2'-deoxyribonucleoside 5'-triphosphate + ADP</text>
        <dbReference type="Rhea" id="RHEA:44640"/>
        <dbReference type="ChEBI" id="CHEBI:30616"/>
        <dbReference type="ChEBI" id="CHEBI:61560"/>
        <dbReference type="ChEBI" id="CHEBI:73316"/>
        <dbReference type="ChEBI" id="CHEBI:456216"/>
        <dbReference type="EC" id="2.7.4.6"/>
    </reaction>
</comment>
<comment type="catalytic activity">
    <reaction evidence="4">
        <text>a ribonucleoside 5'-diphosphate + ATP = a ribonucleoside 5'-triphosphate + ADP</text>
        <dbReference type="Rhea" id="RHEA:18113"/>
        <dbReference type="ChEBI" id="CHEBI:30616"/>
        <dbReference type="ChEBI" id="CHEBI:57930"/>
        <dbReference type="ChEBI" id="CHEBI:61557"/>
        <dbReference type="ChEBI" id="CHEBI:456216"/>
        <dbReference type="EC" id="2.7.4.6"/>
    </reaction>
</comment>
<comment type="cofactor">
    <cofactor evidence="4">
        <name>Mg(2+)</name>
        <dbReference type="ChEBI" id="CHEBI:18420"/>
    </cofactor>
    <text evidence="4">Binds 1 Mg(2+) ion per monomer.</text>
</comment>
<comment type="subunit">
    <text evidence="4">Monomer.</text>
</comment>
<comment type="subcellular location">
    <subcellularLocation>
        <location evidence="4">Nucleus</location>
    </subcellularLocation>
    <subcellularLocation>
        <location evidence="4">Cytoplasm</location>
    </subcellularLocation>
    <text evidence="4">Predominantly nuclear.</text>
</comment>
<comment type="domain">
    <text evidence="4">Consists of three domains, a large central CORE domain and two small peripheral domains, NMPbind and LID, which undergo movements during catalysis. The LID domain closes over the site of phosphoryl transfer upon ATP binding. Assembling and dissambling the active center during each catalytic cycle provides an effective means to prevent ATP hydrolysis.</text>
</comment>
<comment type="similarity">
    <text evidence="4">Belongs to the adenylate kinase family. UMP-CMP kinase subfamily.</text>
</comment>
<organism>
    <name type="scientific">Sus scrofa</name>
    <name type="common">Pig</name>
    <dbReference type="NCBI Taxonomy" id="9823"/>
    <lineage>
        <taxon>Eukaryota</taxon>
        <taxon>Metazoa</taxon>
        <taxon>Chordata</taxon>
        <taxon>Craniata</taxon>
        <taxon>Vertebrata</taxon>
        <taxon>Euteleostomi</taxon>
        <taxon>Mammalia</taxon>
        <taxon>Eutheria</taxon>
        <taxon>Laurasiatheria</taxon>
        <taxon>Artiodactyla</taxon>
        <taxon>Suina</taxon>
        <taxon>Suidae</taxon>
        <taxon>Sus</taxon>
    </lineage>
</organism>